<accession>A6QFK8</accession>
<proteinExistence type="inferred from homology"/>
<comment type="function">
    <text evidence="1">Enables the recognition and targeting of unfolded and aggregated proteins to the ClpC protease or to other proteins involved in proteolysis.</text>
</comment>
<comment type="subunit">
    <text evidence="1">Homodimer.</text>
</comment>
<comment type="domain">
    <text>The N-terminal domain probably binds unfolded/aggregated proteins; the C-terminal domain interacts with ClpC.</text>
</comment>
<comment type="similarity">
    <text evidence="1">Belongs to the MecA family.</text>
</comment>
<sequence length="239" mass="28325">MRIERVDDTTVKLFITYSDIEARGFSREDLWTNRKRGEEFFWSMMDEINEEEDFVVEGPLWIQVHAFEKGVEVTISKSKNEDMMNMSDDDATDQFDEQVQELLAQTLEGEDQLEELFEQRTKEKEAQGSKRQKSSARKNTRTIIVKFNDLEDVINYAYHSNPITTEFEDLLYMVDGTYYYAVYFDSHVDQEVINDSYSQLLEFAYPTDRTEVYLNDYAKIIMSHNVTAQVRRYFPETTE</sequence>
<organism>
    <name type="scientific">Staphylococcus aureus (strain Newman)</name>
    <dbReference type="NCBI Taxonomy" id="426430"/>
    <lineage>
        <taxon>Bacteria</taxon>
        <taxon>Bacillati</taxon>
        <taxon>Bacillota</taxon>
        <taxon>Bacilli</taxon>
        <taxon>Bacillales</taxon>
        <taxon>Staphylococcaceae</taxon>
        <taxon>Staphylococcus</taxon>
    </lineage>
</organism>
<reference key="1">
    <citation type="journal article" date="2008" name="J. Bacteriol.">
        <title>Genome sequence of Staphylococcus aureus strain Newman and comparative analysis of staphylococcal genomes: polymorphism and evolution of two major pathogenicity islands.</title>
        <authorList>
            <person name="Baba T."/>
            <person name="Bae T."/>
            <person name="Schneewind O."/>
            <person name="Takeuchi F."/>
            <person name="Hiramatsu K."/>
        </authorList>
    </citation>
    <scope>NUCLEOTIDE SEQUENCE [LARGE SCALE GENOMIC DNA]</scope>
    <source>
        <strain>Newman</strain>
    </source>
</reference>
<gene>
    <name evidence="1" type="primary">mecA</name>
    <name type="ordered locus">NWMN_0868</name>
</gene>
<name>MECA_STAAE</name>
<feature type="chain" id="PRO_1000073045" description="Adapter protein MecA">
    <location>
        <begin position="1"/>
        <end position="239"/>
    </location>
</feature>
<feature type="region of interest" description="Disordered" evidence="2">
    <location>
        <begin position="118"/>
        <end position="137"/>
    </location>
</feature>
<feature type="compositionally biased region" description="Basic and acidic residues" evidence="2">
    <location>
        <begin position="118"/>
        <end position="128"/>
    </location>
</feature>
<dbReference type="EMBL" id="AP009351">
    <property type="protein sequence ID" value="BAF67140.1"/>
    <property type="molecule type" value="Genomic_DNA"/>
</dbReference>
<dbReference type="RefSeq" id="WP_001217730.1">
    <property type="nucleotide sequence ID" value="NZ_JBBIAE010000002.1"/>
</dbReference>
<dbReference type="SMR" id="A6QFK8"/>
<dbReference type="KEGG" id="sae:NWMN_0868"/>
<dbReference type="HOGENOM" id="CLU_071496_2_1_9"/>
<dbReference type="Proteomes" id="UP000006386">
    <property type="component" value="Chromosome"/>
</dbReference>
<dbReference type="GO" id="GO:0030674">
    <property type="term" value="F:protein-macromolecule adaptor activity"/>
    <property type="evidence" value="ECO:0007669"/>
    <property type="project" value="UniProtKB-UniRule"/>
</dbReference>
<dbReference type="Gene3D" id="3.30.70.1950">
    <property type="match status" value="1"/>
</dbReference>
<dbReference type="HAMAP" id="MF_01124">
    <property type="entry name" value="MecA"/>
    <property type="match status" value="1"/>
</dbReference>
<dbReference type="InterPro" id="IPR038471">
    <property type="entry name" value="MecA_C_sf"/>
</dbReference>
<dbReference type="InterPro" id="IPR008681">
    <property type="entry name" value="Neg-reg_MecA"/>
</dbReference>
<dbReference type="NCBIfam" id="NF002642">
    <property type="entry name" value="PRK02315.1-3"/>
    <property type="match status" value="1"/>
</dbReference>
<dbReference type="NCBIfam" id="NF002644">
    <property type="entry name" value="PRK02315.1-5"/>
    <property type="match status" value="1"/>
</dbReference>
<dbReference type="PANTHER" id="PTHR39161">
    <property type="entry name" value="ADAPTER PROTEIN MECA"/>
    <property type="match status" value="1"/>
</dbReference>
<dbReference type="PANTHER" id="PTHR39161:SF1">
    <property type="entry name" value="ADAPTER PROTEIN MECA 1"/>
    <property type="match status" value="1"/>
</dbReference>
<dbReference type="Pfam" id="PF05389">
    <property type="entry name" value="MecA"/>
    <property type="match status" value="1"/>
</dbReference>
<dbReference type="PIRSF" id="PIRSF029008">
    <property type="entry name" value="MecA"/>
    <property type="match status" value="1"/>
</dbReference>
<evidence type="ECO:0000255" key="1">
    <source>
        <dbReference type="HAMAP-Rule" id="MF_01124"/>
    </source>
</evidence>
<evidence type="ECO:0000256" key="2">
    <source>
        <dbReference type="SAM" id="MobiDB-lite"/>
    </source>
</evidence>
<protein>
    <recommendedName>
        <fullName evidence="1">Adapter protein MecA</fullName>
    </recommendedName>
</protein>